<sequence>MIVSTKLQDHFEKITKILSGFGVEGCISYGEITFSIRDQRDIHLILKKLKKEYLFEQLTDVTAVDYLTYGQSDWQVGKVVSQTGFSRGRQQDFKTAAVDNRFEIIYQLLSMANNVRIRVKCKLKDAQIILVDSVSDLWPSANWAEREVYDMFGIYFNNHPDLRRVLTDYGFVGHPLRKDFPQTGYVEMRYDENLGRVVYEPVEIDDRVNTPRVIRN</sequence>
<feature type="chain" id="PRO_0000358098" description="NADH-quinone oxidoreductase subunit C">
    <location>
        <begin position="1"/>
        <end position="216"/>
    </location>
</feature>
<gene>
    <name evidence="1" type="primary">nuoC</name>
    <name type="ordered locus">FTH_1764</name>
</gene>
<protein>
    <recommendedName>
        <fullName evidence="1">NADH-quinone oxidoreductase subunit C</fullName>
        <ecNumber evidence="1">7.1.1.-</ecNumber>
    </recommendedName>
    <alternativeName>
        <fullName evidence="1">NADH dehydrogenase I subunit C</fullName>
    </alternativeName>
    <alternativeName>
        <fullName evidence="1">NDH-1 subunit C</fullName>
    </alternativeName>
</protein>
<accession>Q0BK53</accession>
<keyword id="KW-0997">Cell inner membrane</keyword>
<keyword id="KW-1003">Cell membrane</keyword>
<keyword id="KW-0472">Membrane</keyword>
<keyword id="KW-0520">NAD</keyword>
<keyword id="KW-0874">Quinone</keyword>
<keyword id="KW-1278">Translocase</keyword>
<keyword id="KW-0813">Transport</keyword>
<keyword id="KW-0830">Ubiquinone</keyword>
<proteinExistence type="inferred from homology"/>
<comment type="function">
    <text evidence="1">NDH-1 shuttles electrons from NADH, via FMN and iron-sulfur (Fe-S) centers, to quinones in the respiratory chain. The immediate electron acceptor for the enzyme in this species is believed to be ubiquinone. Couples the redox reaction to proton translocation (for every two electrons transferred, four hydrogen ions are translocated across the cytoplasmic membrane), and thus conserves the redox energy in a proton gradient.</text>
</comment>
<comment type="catalytic activity">
    <reaction evidence="1">
        <text>a quinone + NADH + 5 H(+)(in) = a quinol + NAD(+) + 4 H(+)(out)</text>
        <dbReference type="Rhea" id="RHEA:57888"/>
        <dbReference type="ChEBI" id="CHEBI:15378"/>
        <dbReference type="ChEBI" id="CHEBI:24646"/>
        <dbReference type="ChEBI" id="CHEBI:57540"/>
        <dbReference type="ChEBI" id="CHEBI:57945"/>
        <dbReference type="ChEBI" id="CHEBI:132124"/>
    </reaction>
</comment>
<comment type="subunit">
    <text evidence="1">NDH-1 is composed of 14 different subunits. Subunits NuoB, C, D, E, F, and G constitute the peripheral sector of the complex.</text>
</comment>
<comment type="subcellular location">
    <subcellularLocation>
        <location evidence="1">Cell inner membrane</location>
        <topology evidence="1">Peripheral membrane protein</topology>
        <orientation evidence="1">Cytoplasmic side</orientation>
    </subcellularLocation>
</comment>
<comment type="similarity">
    <text evidence="1">Belongs to the complex I 30 kDa subunit family.</text>
</comment>
<dbReference type="EC" id="7.1.1.-" evidence="1"/>
<dbReference type="EMBL" id="CP000437">
    <property type="protein sequence ID" value="ABI83531.1"/>
    <property type="molecule type" value="Genomic_DNA"/>
</dbReference>
<dbReference type="SMR" id="Q0BK53"/>
<dbReference type="KEGG" id="fth:FTH_1764"/>
<dbReference type="GO" id="GO:0005886">
    <property type="term" value="C:plasma membrane"/>
    <property type="evidence" value="ECO:0007669"/>
    <property type="project" value="UniProtKB-SubCell"/>
</dbReference>
<dbReference type="GO" id="GO:0008137">
    <property type="term" value="F:NADH dehydrogenase (ubiquinone) activity"/>
    <property type="evidence" value="ECO:0007669"/>
    <property type="project" value="InterPro"/>
</dbReference>
<dbReference type="GO" id="GO:0050136">
    <property type="term" value="F:NADH:ubiquinone reductase (non-electrogenic) activity"/>
    <property type="evidence" value="ECO:0007669"/>
    <property type="project" value="UniProtKB-UniRule"/>
</dbReference>
<dbReference type="GO" id="GO:0048038">
    <property type="term" value="F:quinone binding"/>
    <property type="evidence" value="ECO:0007669"/>
    <property type="project" value="UniProtKB-KW"/>
</dbReference>
<dbReference type="Gene3D" id="3.30.460.80">
    <property type="entry name" value="NADH:ubiquinone oxidoreductase, 30kDa subunit"/>
    <property type="match status" value="1"/>
</dbReference>
<dbReference type="HAMAP" id="MF_01357">
    <property type="entry name" value="NDH1_NuoC"/>
    <property type="match status" value="1"/>
</dbReference>
<dbReference type="InterPro" id="IPR010218">
    <property type="entry name" value="NADH_DH_suC"/>
</dbReference>
<dbReference type="InterPro" id="IPR037232">
    <property type="entry name" value="NADH_quin_OxRdtase_su_C/D-like"/>
</dbReference>
<dbReference type="InterPro" id="IPR001268">
    <property type="entry name" value="NADH_UbQ_OxRdtase_30kDa_su"/>
</dbReference>
<dbReference type="InterPro" id="IPR020396">
    <property type="entry name" value="NADH_UbQ_OxRdtase_CS"/>
</dbReference>
<dbReference type="NCBIfam" id="TIGR01961">
    <property type="entry name" value="NuoC_fam"/>
    <property type="match status" value="1"/>
</dbReference>
<dbReference type="NCBIfam" id="NF004730">
    <property type="entry name" value="PRK06074.1-1"/>
    <property type="match status" value="1"/>
</dbReference>
<dbReference type="PANTHER" id="PTHR10884:SF14">
    <property type="entry name" value="NADH DEHYDROGENASE [UBIQUINONE] IRON-SULFUR PROTEIN 3, MITOCHONDRIAL"/>
    <property type="match status" value="1"/>
</dbReference>
<dbReference type="PANTHER" id="PTHR10884">
    <property type="entry name" value="NADH DEHYDROGENASE UBIQUINONE IRON-SULFUR PROTEIN 3"/>
    <property type="match status" value="1"/>
</dbReference>
<dbReference type="Pfam" id="PF00329">
    <property type="entry name" value="Complex1_30kDa"/>
    <property type="match status" value="1"/>
</dbReference>
<dbReference type="SUPFAM" id="SSF143243">
    <property type="entry name" value="Nqo5-like"/>
    <property type="match status" value="1"/>
</dbReference>
<dbReference type="PROSITE" id="PS00542">
    <property type="entry name" value="COMPLEX1_30K"/>
    <property type="match status" value="1"/>
</dbReference>
<name>NUOC_FRATO</name>
<organism>
    <name type="scientific">Francisella tularensis subsp. holarctica (strain OSU18)</name>
    <dbReference type="NCBI Taxonomy" id="393011"/>
    <lineage>
        <taxon>Bacteria</taxon>
        <taxon>Pseudomonadati</taxon>
        <taxon>Pseudomonadota</taxon>
        <taxon>Gammaproteobacteria</taxon>
        <taxon>Thiotrichales</taxon>
        <taxon>Francisellaceae</taxon>
        <taxon>Francisella</taxon>
    </lineage>
</organism>
<evidence type="ECO:0000255" key="1">
    <source>
        <dbReference type="HAMAP-Rule" id="MF_01357"/>
    </source>
</evidence>
<reference key="1">
    <citation type="journal article" date="2006" name="J. Bacteriol.">
        <title>Chromosome rearrangement and diversification of Francisella tularensis revealed by the type B (OSU18) genome sequence.</title>
        <authorList>
            <person name="Petrosino J.F."/>
            <person name="Xiang Q."/>
            <person name="Karpathy S.E."/>
            <person name="Jiang H."/>
            <person name="Yerrapragada S."/>
            <person name="Liu Y."/>
            <person name="Gioia J."/>
            <person name="Hemphill L."/>
            <person name="Gonzalez A."/>
            <person name="Raghavan T.M."/>
            <person name="Uzman A."/>
            <person name="Fox G.E."/>
            <person name="Highlander S."/>
            <person name="Reichard M."/>
            <person name="Morton R.J."/>
            <person name="Clinkenbeard K.D."/>
            <person name="Weinstock G.M."/>
        </authorList>
    </citation>
    <scope>NUCLEOTIDE SEQUENCE [LARGE SCALE GENOMIC DNA]</scope>
    <source>
        <strain>OSU18</strain>
    </source>
</reference>